<name>TPH_AMOLO</name>
<feature type="signal peptide" evidence="1">
    <location>
        <begin position="1"/>
        <end position="22"/>
    </location>
</feature>
<feature type="propeptide" id="PRO_0000450007" evidence="5">
    <location>
        <begin position="23"/>
        <end position="46"/>
    </location>
</feature>
<feature type="peptide" id="PRO_0000450008" description="Temporin-ALh" evidence="5">
    <location>
        <begin position="47"/>
        <end position="62"/>
    </location>
</feature>
<feature type="modified residue" description="Serine amide" evidence="5">
    <location>
        <position position="62"/>
    </location>
</feature>
<sequence>MFPLKKSLLLLFFLATINLSLCEQERNAEEERRDEPDERNAEVEKRFLPIVGKLLSGLSGLSGK</sequence>
<keyword id="KW-0027">Amidation</keyword>
<keyword id="KW-0878">Amphibian defense peptide</keyword>
<keyword id="KW-0044">Antibiotic</keyword>
<keyword id="KW-0929">Antimicrobial</keyword>
<keyword id="KW-0165">Cleavage on pair of basic residues</keyword>
<keyword id="KW-0295">Fungicide</keyword>
<keyword id="KW-0391">Immunity</keyword>
<keyword id="KW-0399">Innate immunity</keyword>
<keyword id="KW-0964">Secreted</keyword>
<keyword id="KW-0732">Signal</keyword>
<protein>
    <recommendedName>
        <fullName evidence="3">Temporin-ALh</fullName>
    </recommendedName>
</protein>
<organism>
    <name type="scientific">Amolops loloensis</name>
    <name type="common">Lolokou Sucker Frog</name>
    <name type="synonym">Staurois loloensis</name>
    <dbReference type="NCBI Taxonomy" id="318551"/>
    <lineage>
        <taxon>Eukaryota</taxon>
        <taxon>Metazoa</taxon>
        <taxon>Chordata</taxon>
        <taxon>Craniata</taxon>
        <taxon>Vertebrata</taxon>
        <taxon>Euteleostomi</taxon>
        <taxon>Amphibia</taxon>
        <taxon>Batrachia</taxon>
        <taxon>Anura</taxon>
        <taxon>Neobatrachia</taxon>
        <taxon>Ranoidea</taxon>
        <taxon>Ranidae</taxon>
        <taxon>Amolops</taxon>
    </lineage>
</organism>
<proteinExistence type="evidence at protein level"/>
<comment type="function">
    <text evidence="2">Antimicrobial peptide with activity against Gram-positive and Gram-negative bacteria and against fungi (PubMed:19843479). Has been tested against S.aureus (MIC=2.5 ug/mL), B.pumilus (MIC=7.5 ug/mL), B.cereus (MIC=75.0 ug/mL), E.coli (MIC=5.0 ug/mL), B.dysenteriae (MIC=20.0 ug/mL), A.cacoaceticus (MIC=60.0 ug/mL), P.aeruginosa (MIC=2.5 ug/mL) and C.albicans (MIC=2.5 ug/mL) (PubMed:19843479). Also shows a weak hemolytic activity (PubMed:19843479).</text>
</comment>
<comment type="subcellular location">
    <subcellularLocation>
        <location evidence="5">Secreted</location>
    </subcellularLocation>
</comment>
<comment type="tissue specificity">
    <text evidence="5">Expressed by the skin glands.</text>
</comment>
<comment type="similarity">
    <text evidence="4">Belongs to the frog skin active peptide (FSAP) family. Temporin subfamily.</text>
</comment>
<comment type="online information" name="The antimicrobial peptide database">
    <link uri="https://wangapd3.com/database/query_output.php?ID=01935"/>
</comment>
<evidence type="ECO:0000255" key="1"/>
<evidence type="ECO:0000269" key="2">
    <source>
    </source>
</evidence>
<evidence type="ECO:0000303" key="3">
    <source>
    </source>
</evidence>
<evidence type="ECO:0000305" key="4"/>
<evidence type="ECO:0000305" key="5">
    <source>
    </source>
</evidence>
<dbReference type="GO" id="GO:0005576">
    <property type="term" value="C:extracellular region"/>
    <property type="evidence" value="ECO:0007669"/>
    <property type="project" value="UniProtKB-SubCell"/>
</dbReference>
<dbReference type="GO" id="GO:0042742">
    <property type="term" value="P:defense response to bacterium"/>
    <property type="evidence" value="ECO:0007669"/>
    <property type="project" value="UniProtKB-KW"/>
</dbReference>
<dbReference type="GO" id="GO:0050832">
    <property type="term" value="P:defense response to fungus"/>
    <property type="evidence" value="ECO:0007669"/>
    <property type="project" value="UniProtKB-KW"/>
</dbReference>
<dbReference type="GO" id="GO:0045087">
    <property type="term" value="P:innate immune response"/>
    <property type="evidence" value="ECO:0007669"/>
    <property type="project" value="UniProtKB-KW"/>
</dbReference>
<dbReference type="GO" id="GO:0031640">
    <property type="term" value="P:killing of cells of another organism"/>
    <property type="evidence" value="ECO:0007669"/>
    <property type="project" value="UniProtKB-KW"/>
</dbReference>
<dbReference type="InterPro" id="IPR004275">
    <property type="entry name" value="Frog_antimicrobial_propeptide"/>
</dbReference>
<dbReference type="Pfam" id="PF03032">
    <property type="entry name" value="FSAP_sig_propep"/>
    <property type="match status" value="1"/>
</dbReference>
<accession>P0DTU1</accession>
<reference key="1">
    <citation type="journal article" date="2010" name="Comp. Biochem. Physiol.">
        <title>Five novel antimicrobial peptides from skin secretions of the frog, Amolops loloensis.</title>
        <authorList>
            <person name="Wang M."/>
            <person name="Wang Y."/>
            <person name="Wang A."/>
            <person name="Song Y."/>
            <person name="Ma D."/>
            <person name="Yang H."/>
            <person name="Ma Y."/>
            <person name="Lai R."/>
        </authorList>
    </citation>
    <scope>NUCLEOTIDE SEQUENCE [MRNA]</scope>
    <scope>FUNCTION</scope>
    <scope>AMIDATION AT SER-62</scope>
    <scope>SYNTHESIS OF 47-62</scope>
    <source>
        <tissue>Skin</tissue>
    </source>
</reference>